<dbReference type="EMBL" id="BC083588">
    <property type="protein sequence ID" value="AAH83588.1"/>
    <property type="molecule type" value="mRNA"/>
</dbReference>
<dbReference type="EMBL" id="L08814">
    <property type="protein sequence ID" value="AAA40927.1"/>
    <property type="molecule type" value="mRNA"/>
</dbReference>
<dbReference type="PIR" id="S35637">
    <property type="entry name" value="S35637"/>
</dbReference>
<dbReference type="RefSeq" id="NP_112383.1">
    <property type="nucleotide sequence ID" value="NM_031121.1"/>
</dbReference>
<dbReference type="RefSeq" id="XP_006234539.2">
    <property type="nucleotide sequence ID" value="XM_006234477.4"/>
</dbReference>
<dbReference type="RefSeq" id="XP_008760215.2">
    <property type="nucleotide sequence ID" value="XM_008761993.2"/>
</dbReference>
<dbReference type="RefSeq" id="XP_008760216.1">
    <property type="nucleotide sequence ID" value="XM_008761994.1"/>
</dbReference>
<dbReference type="RefSeq" id="XP_017447548.1">
    <property type="nucleotide sequence ID" value="XM_017592059.1"/>
</dbReference>
<dbReference type="RefSeq" id="XP_017447549.1">
    <property type="nucleotide sequence ID" value="XM_017592060.1"/>
</dbReference>
<dbReference type="RefSeq" id="XP_017447550.1">
    <property type="nucleotide sequence ID" value="XM_017592061.1"/>
</dbReference>
<dbReference type="RefSeq" id="XP_063140703.1">
    <property type="nucleotide sequence ID" value="XM_063284633.1"/>
</dbReference>
<dbReference type="RefSeq" id="XP_063140704.1">
    <property type="nucleotide sequence ID" value="XM_063284634.1"/>
</dbReference>
<dbReference type="RefSeq" id="XP_063140705.1">
    <property type="nucleotide sequence ID" value="XM_063284635.1"/>
</dbReference>
<dbReference type="RefSeq" id="XP_063140706.1">
    <property type="nucleotide sequence ID" value="XM_063284636.1"/>
</dbReference>
<dbReference type="RefSeq" id="XP_063140707.1">
    <property type="nucleotide sequence ID" value="XM_063284637.1"/>
</dbReference>
<dbReference type="RefSeq" id="XP_063140708.1">
    <property type="nucleotide sequence ID" value="XM_063284638.1"/>
</dbReference>
<dbReference type="SMR" id="Q04931"/>
<dbReference type="BioGRID" id="249657">
    <property type="interactions" value="1"/>
</dbReference>
<dbReference type="FunCoup" id="Q04931">
    <property type="interactions" value="4051"/>
</dbReference>
<dbReference type="STRING" id="10116.ENSRNOP00000012022"/>
<dbReference type="iPTMnet" id="Q04931"/>
<dbReference type="PhosphoSitePlus" id="Q04931"/>
<dbReference type="jPOST" id="Q04931"/>
<dbReference type="PaxDb" id="10116-ENSRNOP00000012022"/>
<dbReference type="GeneID" id="81785"/>
<dbReference type="KEGG" id="rno:81785"/>
<dbReference type="UCSC" id="RGD:621143">
    <property type="organism name" value="rat"/>
</dbReference>
<dbReference type="AGR" id="RGD:621143"/>
<dbReference type="CTD" id="6749"/>
<dbReference type="RGD" id="621143">
    <property type="gene designation" value="Ssrp1"/>
</dbReference>
<dbReference type="VEuPathDB" id="HostDB:ENSRNOG00000008825"/>
<dbReference type="eggNOG" id="KOG0526">
    <property type="taxonomic scope" value="Eukaryota"/>
</dbReference>
<dbReference type="InParanoid" id="Q04931"/>
<dbReference type="Reactome" id="R-RNO-112382">
    <property type="pathway name" value="Formation of RNA Pol II elongation complex"/>
</dbReference>
<dbReference type="Reactome" id="R-RNO-674695">
    <property type="pathway name" value="RNA Polymerase II Pre-transcription Events"/>
</dbReference>
<dbReference type="Reactome" id="R-RNO-6796648">
    <property type="pathway name" value="TP53 Regulates Transcription of DNA Repair Genes"/>
</dbReference>
<dbReference type="Reactome" id="R-RNO-6804756">
    <property type="pathway name" value="Regulation of TP53 Activity through Phosphorylation"/>
</dbReference>
<dbReference type="Reactome" id="R-RNO-75955">
    <property type="pathway name" value="RNA Polymerase II Transcription Elongation"/>
</dbReference>
<dbReference type="PRO" id="PR:Q04931"/>
<dbReference type="Proteomes" id="UP000002494">
    <property type="component" value="Chromosome 3"/>
</dbReference>
<dbReference type="Bgee" id="ENSRNOG00000008825">
    <property type="expression patterns" value="Expressed in thymus and 20 other cell types or tissues"/>
</dbReference>
<dbReference type="GO" id="GO:0035101">
    <property type="term" value="C:FACT complex"/>
    <property type="evidence" value="ECO:0000266"/>
    <property type="project" value="RGD"/>
</dbReference>
<dbReference type="GO" id="GO:0005730">
    <property type="term" value="C:nucleolus"/>
    <property type="evidence" value="ECO:0007669"/>
    <property type="project" value="UniProtKB-SubCell"/>
</dbReference>
<dbReference type="GO" id="GO:0005634">
    <property type="term" value="C:nucleus"/>
    <property type="evidence" value="ECO:0000266"/>
    <property type="project" value="RGD"/>
</dbReference>
<dbReference type="GO" id="GO:0003682">
    <property type="term" value="F:chromatin binding"/>
    <property type="evidence" value="ECO:0000266"/>
    <property type="project" value="RGD"/>
</dbReference>
<dbReference type="GO" id="GO:0003677">
    <property type="term" value="F:DNA binding"/>
    <property type="evidence" value="ECO:0007669"/>
    <property type="project" value="UniProtKB-KW"/>
</dbReference>
<dbReference type="GO" id="GO:0042393">
    <property type="term" value="F:histone binding"/>
    <property type="evidence" value="ECO:0000318"/>
    <property type="project" value="GO_Central"/>
</dbReference>
<dbReference type="GO" id="GO:0031491">
    <property type="term" value="F:nucleosome binding"/>
    <property type="evidence" value="ECO:0000318"/>
    <property type="project" value="GO_Central"/>
</dbReference>
<dbReference type="GO" id="GO:0006281">
    <property type="term" value="P:DNA repair"/>
    <property type="evidence" value="ECO:0007669"/>
    <property type="project" value="UniProtKB-KW"/>
</dbReference>
<dbReference type="GO" id="GO:0006260">
    <property type="term" value="P:DNA replication"/>
    <property type="evidence" value="ECO:0007669"/>
    <property type="project" value="UniProtKB-KW"/>
</dbReference>
<dbReference type="GO" id="GO:0006337">
    <property type="term" value="P:nucleosome disassembly"/>
    <property type="evidence" value="ECO:0000266"/>
    <property type="project" value="RGD"/>
</dbReference>
<dbReference type="GO" id="GO:1902275">
    <property type="term" value="P:regulation of chromatin organization"/>
    <property type="evidence" value="ECO:0000266"/>
    <property type="project" value="RGD"/>
</dbReference>
<dbReference type="CDD" id="cd21994">
    <property type="entry name" value="HMG-box_SSRP1-like"/>
    <property type="match status" value="1"/>
</dbReference>
<dbReference type="CDD" id="cd13230">
    <property type="entry name" value="PH1_SSRP1-like"/>
    <property type="match status" value="1"/>
</dbReference>
<dbReference type="CDD" id="cd13231">
    <property type="entry name" value="PH2_SSRP1-like"/>
    <property type="match status" value="1"/>
</dbReference>
<dbReference type="FunFam" id="1.10.30.10:FF:000032">
    <property type="entry name" value="FACT complex subunit SSRP1"/>
    <property type="match status" value="1"/>
</dbReference>
<dbReference type="FunFam" id="2.30.29.220:FF:000001">
    <property type="entry name" value="FACT complex subunit SSRP1"/>
    <property type="match status" value="1"/>
</dbReference>
<dbReference type="FunFam" id="2.30.29.30:FF:000119">
    <property type="entry name" value="FACT complex subunit SSRP1"/>
    <property type="match status" value="1"/>
</dbReference>
<dbReference type="FunFam" id="2.30.29.150:FF:000001">
    <property type="entry name" value="Fact complex subunit ssrp1"/>
    <property type="match status" value="1"/>
</dbReference>
<dbReference type="FunFam" id="2.30.29.30:FF:000098">
    <property type="entry name" value="Fact complex subunit ssrp1"/>
    <property type="match status" value="1"/>
</dbReference>
<dbReference type="Gene3D" id="2.30.29.150">
    <property type="match status" value="1"/>
</dbReference>
<dbReference type="Gene3D" id="1.10.30.10">
    <property type="entry name" value="High mobility group box domain"/>
    <property type="match status" value="1"/>
</dbReference>
<dbReference type="Gene3D" id="2.30.29.30">
    <property type="entry name" value="Pleckstrin-homology domain (PH domain)/Phosphotyrosine-binding domain (PTB)"/>
    <property type="match status" value="2"/>
</dbReference>
<dbReference type="Gene3D" id="2.30.29.220">
    <property type="entry name" value="Structure-specific recognition protein (SSRP1)"/>
    <property type="match status" value="1"/>
</dbReference>
<dbReference type="InterPro" id="IPR009071">
    <property type="entry name" value="HMG_box_dom"/>
</dbReference>
<dbReference type="InterPro" id="IPR036910">
    <property type="entry name" value="HMG_box_dom_sf"/>
</dbReference>
<dbReference type="InterPro" id="IPR011993">
    <property type="entry name" value="PH-like_dom_sf"/>
</dbReference>
<dbReference type="InterPro" id="IPR013719">
    <property type="entry name" value="RTT106/SPT16-like_middle_dom"/>
</dbReference>
<dbReference type="InterPro" id="IPR050454">
    <property type="entry name" value="RTT106/SSRP1_HistChap/FACT"/>
</dbReference>
<dbReference type="InterPro" id="IPR048993">
    <property type="entry name" value="SSRP1-like_PH1"/>
</dbReference>
<dbReference type="InterPro" id="IPR000969">
    <property type="entry name" value="SSRP1/POB3"/>
</dbReference>
<dbReference type="InterPro" id="IPR035417">
    <property type="entry name" value="SSRP1/POB3_N"/>
</dbReference>
<dbReference type="InterPro" id="IPR048985">
    <property type="entry name" value="SSRP1_C"/>
</dbReference>
<dbReference type="InterPro" id="IPR024954">
    <property type="entry name" value="SSRP1_DD"/>
</dbReference>
<dbReference type="InterPro" id="IPR038167">
    <property type="entry name" value="SSRP1_sf"/>
</dbReference>
<dbReference type="PANTHER" id="PTHR45849">
    <property type="entry name" value="FACT COMPLEX SUBUNIT SSRP1"/>
    <property type="match status" value="1"/>
</dbReference>
<dbReference type="PANTHER" id="PTHR45849:SF1">
    <property type="entry name" value="FACT COMPLEX SUBUNIT SSRP1"/>
    <property type="match status" value="1"/>
</dbReference>
<dbReference type="Pfam" id="PF00505">
    <property type="entry name" value="HMG_box"/>
    <property type="match status" value="1"/>
</dbReference>
<dbReference type="Pfam" id="PF21103">
    <property type="entry name" value="PH1_SSRP1-like"/>
    <property type="match status" value="1"/>
</dbReference>
<dbReference type="Pfam" id="PF17292">
    <property type="entry name" value="POB3_N"/>
    <property type="match status" value="1"/>
</dbReference>
<dbReference type="Pfam" id="PF08512">
    <property type="entry name" value="Rttp106-like_middle"/>
    <property type="match status" value="1"/>
</dbReference>
<dbReference type="Pfam" id="PF03531">
    <property type="entry name" value="SSrecog"/>
    <property type="match status" value="1"/>
</dbReference>
<dbReference type="Pfam" id="PF21092">
    <property type="entry name" value="SSRP1_C"/>
    <property type="match status" value="1"/>
</dbReference>
<dbReference type="PRINTS" id="PR00887">
    <property type="entry name" value="SSRCOGNITION"/>
</dbReference>
<dbReference type="SMART" id="SM00398">
    <property type="entry name" value="HMG"/>
    <property type="match status" value="1"/>
</dbReference>
<dbReference type="SMART" id="SM01287">
    <property type="entry name" value="Rtt106"/>
    <property type="match status" value="1"/>
</dbReference>
<dbReference type="SUPFAM" id="SSF47095">
    <property type="entry name" value="HMG-box"/>
    <property type="match status" value="1"/>
</dbReference>
<dbReference type="SUPFAM" id="SSF50729">
    <property type="entry name" value="PH domain-like"/>
    <property type="match status" value="1"/>
</dbReference>
<dbReference type="PROSITE" id="PS50118">
    <property type="entry name" value="HMG_BOX_2"/>
    <property type="match status" value="1"/>
</dbReference>
<gene>
    <name type="primary">Ssrp1</name>
    <name type="synonym">Ciidbp</name>
</gene>
<keyword id="KW-0007">Acetylation</keyword>
<keyword id="KW-0158">Chromosome</keyword>
<keyword id="KW-0227">DNA damage</keyword>
<keyword id="KW-0234">DNA repair</keyword>
<keyword id="KW-0235">DNA replication</keyword>
<keyword id="KW-0238">DNA-binding</keyword>
<keyword id="KW-1017">Isopeptide bond</keyword>
<keyword id="KW-0539">Nucleus</keyword>
<keyword id="KW-0597">Phosphoprotein</keyword>
<keyword id="KW-1185">Reference proteome</keyword>
<keyword id="KW-0804">Transcription</keyword>
<keyword id="KW-0805">Transcription regulation</keyword>
<keyword id="KW-0832">Ubl conjugation</keyword>
<evidence type="ECO:0000250" key="1"/>
<evidence type="ECO:0000250" key="2">
    <source>
        <dbReference type="UniProtKB" id="Q05344"/>
    </source>
</evidence>
<evidence type="ECO:0000250" key="3">
    <source>
        <dbReference type="UniProtKB" id="Q08943"/>
    </source>
</evidence>
<evidence type="ECO:0000250" key="4">
    <source>
        <dbReference type="UniProtKB" id="Q08945"/>
    </source>
</evidence>
<evidence type="ECO:0000255" key="5">
    <source>
        <dbReference type="PROSITE-ProRule" id="PRU00267"/>
    </source>
</evidence>
<evidence type="ECO:0000256" key="6">
    <source>
        <dbReference type="SAM" id="MobiDB-lite"/>
    </source>
</evidence>
<evidence type="ECO:0000269" key="7">
    <source>
    </source>
</evidence>
<evidence type="ECO:0000305" key="8"/>
<evidence type="ECO:0007744" key="9">
    <source>
    </source>
</evidence>
<feature type="initiator methionine" description="Removed" evidence="4">
    <location>
        <position position="1"/>
    </location>
</feature>
<feature type="chain" id="PRO_0000048608" description="FACT complex subunit SSRP1">
    <location>
        <begin position="2"/>
        <end position="709"/>
    </location>
</feature>
<feature type="DNA-binding region" description="HMG box" evidence="5">
    <location>
        <begin position="547"/>
        <end position="615"/>
    </location>
</feature>
<feature type="region of interest" description="Disordered" evidence="6">
    <location>
        <begin position="458"/>
        <end position="709"/>
    </location>
</feature>
<feature type="compositionally biased region" description="Acidic residues" evidence="6">
    <location>
        <begin position="470"/>
        <end position="496"/>
    </location>
</feature>
<feature type="compositionally biased region" description="Low complexity" evidence="6">
    <location>
        <begin position="497"/>
        <end position="507"/>
    </location>
</feature>
<feature type="compositionally biased region" description="Basic residues" evidence="6">
    <location>
        <begin position="515"/>
        <end position="533"/>
    </location>
</feature>
<feature type="compositionally biased region" description="Basic and acidic residues" evidence="6">
    <location>
        <begin position="534"/>
        <end position="546"/>
    </location>
</feature>
<feature type="compositionally biased region" description="Basic and acidic residues" evidence="6">
    <location>
        <begin position="577"/>
        <end position="624"/>
    </location>
</feature>
<feature type="compositionally biased region" description="Basic residues" evidence="6">
    <location>
        <begin position="625"/>
        <end position="634"/>
    </location>
</feature>
<feature type="compositionally biased region" description="Low complexity" evidence="6">
    <location>
        <begin position="643"/>
        <end position="659"/>
    </location>
</feature>
<feature type="compositionally biased region" description="Polar residues" evidence="6">
    <location>
        <begin position="696"/>
        <end position="709"/>
    </location>
</feature>
<feature type="site" description="Cleavage; by caspase-3 and/or caspase-7" evidence="1">
    <location>
        <begin position="450"/>
        <end position="451"/>
    </location>
</feature>
<feature type="modified residue" description="N-acetylalanine" evidence="4">
    <location>
        <position position="2"/>
    </location>
</feature>
<feature type="modified residue" description="Phosphothreonine" evidence="4">
    <location>
        <position position="170"/>
    </location>
</feature>
<feature type="modified residue" description="N6-acetyllysine" evidence="4">
    <location>
        <position position="233"/>
    </location>
</feature>
<feature type="modified residue" description="N6-acetyllysine" evidence="4">
    <location>
        <position position="413"/>
    </location>
</feature>
<feature type="modified residue" description="Phosphotyrosine" evidence="3">
    <location>
        <position position="441"/>
    </location>
</feature>
<feature type="modified residue" description="Phosphoserine" evidence="9">
    <location>
        <position position="444"/>
    </location>
</feature>
<feature type="modified residue" description="Phosphotyrosine" evidence="3">
    <location>
        <position position="452"/>
    </location>
</feature>
<feature type="modified residue" description="Phosphoserine" evidence="4">
    <location>
        <position position="471"/>
    </location>
</feature>
<feature type="modified residue" description="Phosphoserine; by CK2" evidence="4">
    <location>
        <position position="510"/>
    </location>
</feature>
<feature type="modified residue" description="N6-acetyllysine" evidence="3">
    <location>
        <position position="542"/>
    </location>
</feature>
<feature type="modified residue" description="Phosphoserine; by CK2" evidence="4">
    <location>
        <position position="657"/>
    </location>
</feature>
<feature type="modified residue" description="Phosphoserine" evidence="4">
    <location>
        <position position="659"/>
    </location>
</feature>
<feature type="modified residue" description="Phosphoserine" evidence="4">
    <location>
        <position position="667"/>
    </location>
</feature>
<feature type="modified residue" description="Phosphoserine" evidence="4">
    <location>
        <position position="668"/>
    </location>
</feature>
<feature type="modified residue" description="Phosphoserine" evidence="4">
    <location>
        <position position="671"/>
    </location>
</feature>
<feature type="modified residue" description="Phosphoserine" evidence="4">
    <location>
        <position position="672"/>
    </location>
</feature>
<feature type="modified residue" description="Phosphoserine" evidence="4">
    <location>
        <position position="673"/>
    </location>
</feature>
<feature type="modified residue" description="Phosphoserine; by CK2" evidence="4">
    <location>
        <position position="688"/>
    </location>
</feature>
<feature type="cross-link" description="Glycyl lysine isopeptide (Lys-Gly) (interchain with G-Cter in SUMO2)" evidence="4">
    <location>
        <position position="90"/>
    </location>
</feature>
<feature type="cross-link" description="Glycyl lysine isopeptide (Lys-Gly) (interchain with G-Cter in SUMO2)" evidence="4">
    <location>
        <position position="296"/>
    </location>
</feature>
<feature type="cross-link" description="Glycyl lysine isopeptide (Lys-Gly) (interchain with G-Cter in SUMO2)" evidence="4">
    <location>
        <position position="364"/>
    </location>
</feature>
<feature type="sequence conflict" description="In Ref. 2; AAA40927." evidence="8" ref="2">
    <original>G</original>
    <variation>A</variation>
    <location>
        <position position="382"/>
    </location>
</feature>
<feature type="sequence conflict" description="In Ref. 2; AAA40927." evidence="8" ref="2">
    <original>F</original>
    <variation>S</variation>
    <location>
        <position position="391"/>
    </location>
</feature>
<feature type="sequence conflict" description="In Ref. 2; AAA40927." evidence="8" ref="2">
    <original>A</original>
    <variation>G</variation>
    <location>
        <position position="600"/>
    </location>
</feature>
<feature type="sequence conflict" description="In Ref. 2; AAA40927." evidence="8" ref="2">
    <original>K</original>
    <variation>E</variation>
    <location>
        <position position="609"/>
    </location>
</feature>
<feature type="sequence conflict" description="In Ref. 2; AAA40927." evidence="8" ref="2">
    <original>S</original>
    <variation>A</variation>
    <location>
        <position position="651"/>
    </location>
</feature>
<proteinExistence type="evidence at protein level"/>
<sequence length="709" mass="80914">MAETLEFNDIFQEVKGSMNDGRLRLSRQGIIFKNSKTGKVDNIQAGELTEGIWRRVALGHGLKLLTKNGHVYKYDGFRESEFEKLSDFFKTHYRLELMEKDLCVKGWNWGTVKFGGQLLSFDIGDQPVFEIPLSNVSQCTTGKNEVTLEFHQNDDAEVSLMEVRFYVPPTQEDGVDPVEAFAQNVLSKADVIQATGDAICIFRELQCLTPRGRYDIRIYPTFLHLHGKTFDYKIPYTTVLRLFLLPHKDQRQMFFVISLDPPIKQGQTRYHFLILLFSKDEDISLTLNMNEEEVEKRFEGRLTKNMSGSLYEMVSRVMKALVNRKITVPGNFQGHSGAQCITCSYKASSGLLYPLERGFIYVHKPPVHIRFDEISFVNFARGTTTTRSFDFEIETKQGTQYTFSSIEREEYGKLFDFVNAKKLNIKNRGLKEGINPGYDDYADSDEDQHDAYLERMKEEGKIREENANDSSDDSGEETDESFNPGEEEEDVAEEFDSNASASSSSNEGDSDREEKKRKQLKRAKMAKDRKSRKKSSEGKKGKDPNAPKRPMSAYMLWLNASREKIKSDHPGISITDLSKKAGEIWKGMSKEKKEEWDRKAEDARREYEKAMKEYEGGRGDSSKRDKSKKKKKVKAKLEKKSTPSRGSSSKSSSRQLSDSFKSKEFVSSDESSSGENKSKKKRRRSEDSDEEELASTPPSSEDSASGSDE</sequence>
<accession>Q04931</accession>
<accession>Q5XIT2</accession>
<protein>
    <recommendedName>
        <fullName>FACT complex subunit SSRP1</fullName>
    </recommendedName>
    <alternativeName>
        <fullName>Facilitates chromatin transcription complex subunit SSRP1</fullName>
    </alternativeName>
    <alternativeName>
        <fullName>Recombination signal sequence recognition protein 1</fullName>
    </alternativeName>
    <alternativeName>
        <fullName>Structure-specific recognition protein 1</fullName>
    </alternativeName>
    <alternativeName>
        <fullName>T160</fullName>
    </alternativeName>
</protein>
<comment type="function">
    <text evidence="3 4">Component of the FACT complex, a general chromatin factor that acts to reorganize nucleosomes. The FACT complex is involved in multiple processes that require DNA as a template such as mRNA elongation, DNA replication and DNA repair. During transcription elongation the FACT complex acts as a histone chaperone that both destabilizes and restores nucleosomal structure. It facilitates the passage of RNA polymerase II and transcription by promoting the dissociation of one histone H2A-H2B dimer from the nucleosome, then subsequently promotes the reestablishment of the nucleosome following the passage of RNA polymerase II. The FACT complex is probably also involved in phosphorylation of 'Ser-392' of p53/TP53 via its association with CK2 (casein kinase II). Binds specifically to double-stranded DNA and at low levels to DNA modified by the antitumor agent cisplatin. May potentiate cisplatin-induced cell death by blocking replication and repair of modified DNA. Also acts as a transcriptional coactivator for p63/TP63.</text>
</comment>
<comment type="subunit">
    <text evidence="3 4 7">Interacts with MYOG (via C-terminal region) (By similarity). Component of the FACT complex, a stable heterodimer of SSRP1 and SUPT16H. Also a component of a CK2-SPT16-SSRP1 complex which forms following UV irradiation, composed of SSRP1, SUPT16H, CSNK2A1, CSNK2A2 and CSNK2B. Binds to histone H3-H4 tetramers, but not to intact nucleosomes. Identified in a centromere complex containing histones H2A, H2B and H4, and at least CENPA, CENPB, CENPC, CENPT, CENPN, HJURP, SUPT16H, SSRP1 and RSF1. Interacts with isoform gamma of TP63. Interacts with FYTTD1/UIF (By similarity). Interacts with SRF (PubMed:10336466). Interacts with NEK9 (By similarity).</text>
</comment>
<comment type="subcellular location">
    <subcellularLocation>
        <location evidence="2">Nucleus</location>
    </subcellularLocation>
    <subcellularLocation>
        <location evidence="2">Chromosome</location>
    </subcellularLocation>
    <subcellularLocation>
        <location evidence="2">Nucleus</location>
        <location evidence="2">Nucleolus</location>
    </subcellularLocation>
    <text evidence="2">Colocalizes with RNA polymerase II on chromatin. Recruited to actively transcribed loci.</text>
</comment>
<comment type="PTM">
    <text evidence="1">Phosphorylated by CK2 following UV but not gamma irradiation. Phosphorylation inhibits its DNA-binding activity (By similarity).</text>
</comment>
<comment type="PTM">
    <text evidence="1">Ubiquitinated. Polyubiquitinated following caspase cleavage resulting in degradation of the N-terminal ubiquitinated part of the cleaved protein (By similarity).</text>
</comment>
<comment type="PTM">
    <text evidence="1">Sumoylated.</text>
</comment>
<comment type="similarity">
    <text evidence="8">Belongs to the SSRP1 family.</text>
</comment>
<organism>
    <name type="scientific">Rattus norvegicus</name>
    <name type="common">Rat</name>
    <dbReference type="NCBI Taxonomy" id="10116"/>
    <lineage>
        <taxon>Eukaryota</taxon>
        <taxon>Metazoa</taxon>
        <taxon>Chordata</taxon>
        <taxon>Craniata</taxon>
        <taxon>Vertebrata</taxon>
        <taxon>Euteleostomi</taxon>
        <taxon>Mammalia</taxon>
        <taxon>Eutheria</taxon>
        <taxon>Euarchontoglires</taxon>
        <taxon>Glires</taxon>
        <taxon>Rodentia</taxon>
        <taxon>Myomorpha</taxon>
        <taxon>Muroidea</taxon>
        <taxon>Muridae</taxon>
        <taxon>Murinae</taxon>
        <taxon>Rattus</taxon>
    </lineage>
</organism>
<name>SSRP1_RAT</name>
<reference key="1">
    <citation type="journal article" date="2004" name="Genome Res.">
        <title>The status, quality, and expansion of the NIH full-length cDNA project: the Mammalian Gene Collection (MGC).</title>
        <authorList>
            <consortium name="The MGC Project Team"/>
        </authorList>
    </citation>
    <scope>NUCLEOTIDE SEQUENCE [LARGE SCALE MRNA]</scope>
    <source>
        <tissue>Testis</tissue>
    </source>
</reference>
<reference key="2">
    <citation type="journal article" date="1993" name="Nucleic Acids Res.">
        <title>Rat and chick cDNA clones encoding HMG-like proteins.</title>
        <authorList>
            <person name="Wang L."/>
            <person name="Precht P."/>
            <person name="Balakir R."/>
            <person name="Horton W.E. Jr."/>
        </authorList>
    </citation>
    <scope>NUCLEOTIDE SEQUENCE [MRNA] OF 149-709</scope>
    <source>
        <tissue>Chondrosarcoma</tissue>
    </source>
</reference>
<reference key="3">
    <citation type="journal article" date="1999" name="J. Biol. Chem.">
        <title>Cooperative transcriptional activation by serum response factor and the high mobility group protein SSRP1.</title>
        <authorList>
            <person name="Spencer J.A."/>
            <person name="Baron M.H."/>
            <person name="Olson E.N."/>
        </authorList>
    </citation>
    <scope>INTERACTION WITH SRF</scope>
</reference>
<reference key="4">
    <citation type="journal article" date="2012" name="Nat. Commun.">
        <title>Quantitative maps of protein phosphorylation sites across 14 different rat organs and tissues.</title>
        <authorList>
            <person name="Lundby A."/>
            <person name="Secher A."/>
            <person name="Lage K."/>
            <person name="Nordsborg N.B."/>
            <person name="Dmytriyev A."/>
            <person name="Lundby C."/>
            <person name="Olsen J.V."/>
        </authorList>
    </citation>
    <scope>PHOSPHORYLATION [LARGE SCALE ANALYSIS] AT SER-444</scope>
    <scope>IDENTIFICATION BY MASS SPECTROMETRY [LARGE SCALE ANALYSIS]</scope>
</reference>